<protein>
    <recommendedName>
        <fullName>Uncharacterized membrane protein MT0380</fullName>
    </recommendedName>
</protein>
<keyword id="KW-1003">Cell membrane</keyword>
<keyword id="KW-0472">Membrane</keyword>
<keyword id="KW-1185">Reference proteome</keyword>
<keyword id="KW-0812">Transmembrane</keyword>
<keyword id="KW-1133">Transmembrane helix</keyword>
<sequence>MSTAVTAMPDILDPMYWLGANGVFGSAVLPGILIIVFIETGLLFPLLPGESLLFTGGLLSASPAPPVTIGVLAPCVALVAVLGDQTAYFIGRRIGPALFKKEDSRFFKKHYVTESHAFFEKYGKWTIILARFVPIARTFVPVIAGVSYMRYPVFLGFDIVGGVAWGAGVTLAGYFLGSVPFVHMNFQLIILAIVFVSLLPALVSAARVYRARRNAPQSDPDPLVLPE</sequence>
<proteinExistence type="inferred from homology"/>
<reference key="1">
    <citation type="journal article" date="2002" name="J. Bacteriol.">
        <title>Whole-genome comparison of Mycobacterium tuberculosis clinical and laboratory strains.</title>
        <authorList>
            <person name="Fleischmann R.D."/>
            <person name="Alland D."/>
            <person name="Eisen J.A."/>
            <person name="Carpenter L."/>
            <person name="White O."/>
            <person name="Peterson J.D."/>
            <person name="DeBoy R.T."/>
            <person name="Dodson R.J."/>
            <person name="Gwinn M.L."/>
            <person name="Haft D.H."/>
            <person name="Hickey E.K."/>
            <person name="Kolonay J.F."/>
            <person name="Nelson W.C."/>
            <person name="Umayam L.A."/>
            <person name="Ermolaeva M.D."/>
            <person name="Salzberg S.L."/>
            <person name="Delcher A."/>
            <person name="Utterback T.R."/>
            <person name="Weidman J.F."/>
            <person name="Khouri H.M."/>
            <person name="Gill J."/>
            <person name="Mikula A."/>
            <person name="Bishai W."/>
            <person name="Jacobs W.R. Jr."/>
            <person name="Venter J.C."/>
            <person name="Fraser C.M."/>
        </authorList>
    </citation>
    <scope>NUCLEOTIDE SEQUENCE [LARGE SCALE GENOMIC DNA]</scope>
    <source>
        <strain>CDC 1551 / Oshkosh</strain>
    </source>
</reference>
<dbReference type="EMBL" id="AE000516">
    <property type="protein sequence ID" value="AAK44601.1"/>
    <property type="molecule type" value="Genomic_DNA"/>
</dbReference>
<dbReference type="PIR" id="E70576">
    <property type="entry name" value="E70576"/>
</dbReference>
<dbReference type="RefSeq" id="WP_003401857.1">
    <property type="nucleotide sequence ID" value="NZ_KK341227.1"/>
</dbReference>
<dbReference type="KEGG" id="mtc:MT0380"/>
<dbReference type="PATRIC" id="fig|83331.31.peg.403"/>
<dbReference type="HOGENOM" id="CLU_044208_6_0_11"/>
<dbReference type="Proteomes" id="UP000001020">
    <property type="component" value="Chromosome"/>
</dbReference>
<dbReference type="GO" id="GO:0005886">
    <property type="term" value="C:plasma membrane"/>
    <property type="evidence" value="ECO:0007669"/>
    <property type="project" value="UniProtKB-SubCell"/>
</dbReference>
<dbReference type="InterPro" id="IPR032818">
    <property type="entry name" value="DedA-like"/>
</dbReference>
<dbReference type="InterPro" id="IPR032816">
    <property type="entry name" value="VTT_dom"/>
</dbReference>
<dbReference type="PANTHER" id="PTHR30353">
    <property type="entry name" value="INNER MEMBRANE PROTEIN DEDA-RELATED"/>
    <property type="match status" value="1"/>
</dbReference>
<dbReference type="PANTHER" id="PTHR30353:SF0">
    <property type="entry name" value="TRANSMEMBRANE PROTEIN"/>
    <property type="match status" value="1"/>
</dbReference>
<dbReference type="Pfam" id="PF09335">
    <property type="entry name" value="VTT_dom"/>
    <property type="match status" value="1"/>
</dbReference>
<organism>
    <name type="scientific">Mycobacterium tuberculosis (strain CDC 1551 / Oshkosh)</name>
    <dbReference type="NCBI Taxonomy" id="83331"/>
    <lineage>
        <taxon>Bacteria</taxon>
        <taxon>Bacillati</taxon>
        <taxon>Actinomycetota</taxon>
        <taxon>Actinomycetes</taxon>
        <taxon>Mycobacteriales</taxon>
        <taxon>Mycobacteriaceae</taxon>
        <taxon>Mycobacterium</taxon>
        <taxon>Mycobacterium tuberculosis complex</taxon>
    </lineage>
</organism>
<comment type="subcellular location">
    <subcellularLocation>
        <location evidence="2">Cell membrane</location>
        <topology evidence="2">Multi-pass membrane protein</topology>
    </subcellularLocation>
</comment>
<comment type="similarity">
    <text evidence="2">Belongs to the DedA family.</text>
</comment>
<feature type="chain" id="PRO_0000427034" description="Uncharacterized membrane protein MT0380">
    <location>
        <begin position="1"/>
        <end position="227"/>
    </location>
</feature>
<feature type="transmembrane region" description="Helical" evidence="1">
    <location>
        <begin position="27"/>
        <end position="47"/>
    </location>
</feature>
<feature type="transmembrane region" description="Helical" evidence="1">
    <location>
        <begin position="63"/>
        <end position="83"/>
    </location>
</feature>
<feature type="transmembrane region" description="Helical" evidence="1">
    <location>
        <begin position="126"/>
        <end position="146"/>
    </location>
</feature>
<feature type="transmembrane region" description="Helical" evidence="1">
    <location>
        <begin position="153"/>
        <end position="173"/>
    </location>
</feature>
<feature type="transmembrane region" description="Helical" evidence="1">
    <location>
        <begin position="186"/>
        <end position="206"/>
    </location>
</feature>
<name>Y364_MYCTO</name>
<gene>
    <name type="ordered locus">MT0380</name>
</gene>
<accession>P9WP08</accession>
<accession>L0T555</accession>
<accession>O06314</accession>
<evidence type="ECO:0000255" key="1"/>
<evidence type="ECO:0000305" key="2"/>